<dbReference type="EMBL" id="EU925946">
    <property type="protein sequence ID" value="ACI41278.1"/>
    <property type="molecule type" value="mRNA"/>
</dbReference>
<dbReference type="EMBL" id="FM863950">
    <property type="protein sequence ID" value="CAS03548.1"/>
    <property type="molecule type" value="mRNA"/>
</dbReference>
<dbReference type="SMR" id="B6DCL2"/>
<dbReference type="ArachnoServer" id="AS000895">
    <property type="toxin name" value="U1-lycotoxin-Ls1d"/>
</dbReference>
<dbReference type="GO" id="GO:0005576">
    <property type="term" value="C:extracellular region"/>
    <property type="evidence" value="ECO:0007669"/>
    <property type="project" value="UniProtKB-SubCell"/>
</dbReference>
<dbReference type="GO" id="GO:0090729">
    <property type="term" value="F:toxin activity"/>
    <property type="evidence" value="ECO:0007669"/>
    <property type="project" value="UniProtKB-KW"/>
</dbReference>
<dbReference type="InterPro" id="IPR019553">
    <property type="entry name" value="Spider_toxin_CSTX_knottin"/>
</dbReference>
<dbReference type="InterPro" id="IPR011142">
    <property type="entry name" value="Spider_toxin_CSTX_Knottin_CS"/>
</dbReference>
<dbReference type="Pfam" id="PF10530">
    <property type="entry name" value="Toxin_35"/>
    <property type="match status" value="1"/>
</dbReference>
<dbReference type="PROSITE" id="PS60029">
    <property type="entry name" value="SPIDER_CSTX"/>
    <property type="match status" value="1"/>
</dbReference>
<evidence type="ECO:0000250" key="1"/>
<evidence type="ECO:0000255" key="2"/>
<evidence type="ECO:0000305" key="3"/>
<feature type="signal peptide" evidence="2">
    <location>
        <begin position="1"/>
        <end position="20"/>
    </location>
</feature>
<feature type="propeptide" id="PRO_0000401541" evidence="1">
    <location>
        <begin position="21"/>
        <end position="41"/>
    </location>
</feature>
<feature type="chain" id="PRO_0000401542" description="U1-lycotoxin-Ls1d">
    <location>
        <begin position="42"/>
        <end position="107"/>
    </location>
</feature>
<feature type="disulfide bond" evidence="1">
    <location>
        <begin position="44"/>
        <end position="59"/>
    </location>
</feature>
<feature type="disulfide bond" evidence="1">
    <location>
        <begin position="51"/>
        <end position="68"/>
    </location>
</feature>
<feature type="disulfide bond" evidence="1">
    <location>
        <begin position="58"/>
        <end position="86"/>
    </location>
</feature>
<feature type="disulfide bond" evidence="1">
    <location>
        <begin position="70"/>
        <end position="84"/>
    </location>
</feature>
<name>TX123_LYCSI</name>
<comment type="subcellular location">
    <subcellularLocation>
        <location evidence="1">Secreted</location>
    </subcellularLocation>
</comment>
<comment type="tissue specificity">
    <text>Expressed by the venom gland.</text>
</comment>
<comment type="domain">
    <text evidence="1">The presence of a 'disulfide through disulfide knot' structurally defines this protein as a knottin.</text>
</comment>
<comment type="similarity">
    <text evidence="3">Belongs to the neurotoxin 19 (CSTX) family. 04 (U1-Lctx) subfamily.</text>
</comment>
<organism>
    <name type="scientific">Lycosa singoriensis</name>
    <name type="common">Wolf spider</name>
    <name type="synonym">Aranea singoriensis</name>
    <dbReference type="NCBI Taxonomy" id="434756"/>
    <lineage>
        <taxon>Eukaryota</taxon>
        <taxon>Metazoa</taxon>
        <taxon>Ecdysozoa</taxon>
        <taxon>Arthropoda</taxon>
        <taxon>Chelicerata</taxon>
        <taxon>Arachnida</taxon>
        <taxon>Araneae</taxon>
        <taxon>Araneomorphae</taxon>
        <taxon>Entelegynae</taxon>
        <taxon>Lycosoidea</taxon>
        <taxon>Lycosidae</taxon>
        <taxon>Lycosa</taxon>
    </lineage>
</organism>
<reference key="1">
    <citation type="journal article" date="2010" name="Zoology">
        <title>Transcriptome analysis of the venom glands of the Chinese wolf spider Lycosa singoriensis.</title>
        <authorList>
            <person name="Zhang Y."/>
            <person name="Chen J."/>
            <person name="Tang X."/>
            <person name="Wang F."/>
            <person name="Jiang L."/>
            <person name="Xiong X."/>
            <person name="Wang M."/>
            <person name="Rong M."/>
            <person name="Liu Z."/>
            <person name="Liang S."/>
        </authorList>
    </citation>
    <scope>NUCLEOTIDE SEQUENCE [LARGE SCALE MRNA]</scope>
    <source>
        <tissue>Venom gland</tissue>
    </source>
</reference>
<sequence length="107" mass="11910">MMKVLVVVALLVTLISYSSSEGIDDLEADELLSLMANEQTRKECIPKHHECTSNKHGCCRGNFFKYKCQCTTVVTQDGEQTERCFCGTPPHHKAAELVVGFGRKIFG</sequence>
<keyword id="KW-1015">Disulfide bond</keyword>
<keyword id="KW-0960">Knottin</keyword>
<keyword id="KW-0964">Secreted</keyword>
<keyword id="KW-0732">Signal</keyword>
<keyword id="KW-0800">Toxin</keyword>
<proteinExistence type="evidence at transcript level"/>
<accession>B6DCL2</accession>
<protein>
    <recommendedName>
        <fullName>U1-lycotoxin-Ls1d</fullName>
    </recommendedName>
    <alternativeName>
        <fullName>Toxin-like structure LSTX-A23</fullName>
    </alternativeName>
</protein>